<evidence type="ECO:0000255" key="1">
    <source>
        <dbReference type="HAMAP-Rule" id="MF_00489"/>
    </source>
</evidence>
<name>Y6928_PSEAB</name>
<gene>
    <name type="ordered locus">PA14_69280</name>
</gene>
<feature type="chain" id="PRO_1000014432" description="UPF0178 protein PA14_69280">
    <location>
        <begin position="1"/>
        <end position="160"/>
    </location>
</feature>
<protein>
    <recommendedName>
        <fullName evidence="1">UPF0178 protein PA14_69280</fullName>
    </recommendedName>
</protein>
<sequence>MRIWIDADACPKAAKELVCKFALKRKLEVWMVAGQPQVKPPFACVRLVVVESGMDAADDYLVEQAEPGDLAICSDVPLADRLIKKQVAALDPRGREFDARNMGDKLAMRNLMADLRDQGQMGGGQAPYAERDRQAFANALDRLLTRLQREADLRASQPHR</sequence>
<proteinExistence type="inferred from homology"/>
<reference key="1">
    <citation type="journal article" date="2006" name="Genome Biol.">
        <title>Genomic analysis reveals that Pseudomonas aeruginosa virulence is combinatorial.</title>
        <authorList>
            <person name="Lee D.G."/>
            <person name="Urbach J.M."/>
            <person name="Wu G."/>
            <person name="Liberati N.T."/>
            <person name="Feinbaum R.L."/>
            <person name="Miyata S."/>
            <person name="Diggins L.T."/>
            <person name="He J."/>
            <person name="Saucier M."/>
            <person name="Deziel E."/>
            <person name="Friedman L."/>
            <person name="Li L."/>
            <person name="Grills G."/>
            <person name="Montgomery K."/>
            <person name="Kucherlapati R."/>
            <person name="Rahme L.G."/>
            <person name="Ausubel F.M."/>
        </authorList>
    </citation>
    <scope>NUCLEOTIDE SEQUENCE [LARGE SCALE GENOMIC DNA]</scope>
    <source>
        <strain>UCBPP-PA14</strain>
    </source>
</reference>
<comment type="similarity">
    <text evidence="1">Belongs to the UPF0178 family.</text>
</comment>
<dbReference type="EMBL" id="CP000438">
    <property type="protein sequence ID" value="ABJ14630.1"/>
    <property type="molecule type" value="Genomic_DNA"/>
</dbReference>
<dbReference type="RefSeq" id="WP_003136094.1">
    <property type="nucleotide sequence ID" value="NZ_CP034244.1"/>
</dbReference>
<dbReference type="KEGG" id="pau:PA14_69280"/>
<dbReference type="PseudoCAP" id="PA14_69280"/>
<dbReference type="HOGENOM" id="CLU_106619_2_1_6"/>
<dbReference type="BioCyc" id="PAER208963:G1G74-5837-MONOMER"/>
<dbReference type="Proteomes" id="UP000000653">
    <property type="component" value="Chromosome"/>
</dbReference>
<dbReference type="CDD" id="cd18720">
    <property type="entry name" value="PIN_YqxD-like"/>
    <property type="match status" value="1"/>
</dbReference>
<dbReference type="HAMAP" id="MF_00489">
    <property type="entry name" value="UPF0178"/>
    <property type="match status" value="1"/>
</dbReference>
<dbReference type="InterPro" id="IPR003791">
    <property type="entry name" value="UPF0178"/>
</dbReference>
<dbReference type="NCBIfam" id="NF001095">
    <property type="entry name" value="PRK00124.1"/>
    <property type="match status" value="1"/>
</dbReference>
<dbReference type="PANTHER" id="PTHR35146">
    <property type="entry name" value="UPF0178 PROTEIN YAII"/>
    <property type="match status" value="1"/>
</dbReference>
<dbReference type="PANTHER" id="PTHR35146:SF1">
    <property type="entry name" value="UPF0178 PROTEIN YAII"/>
    <property type="match status" value="1"/>
</dbReference>
<dbReference type="Pfam" id="PF02639">
    <property type="entry name" value="DUF188"/>
    <property type="match status" value="1"/>
</dbReference>
<accession>Q02EB7</accession>
<organism>
    <name type="scientific">Pseudomonas aeruginosa (strain UCBPP-PA14)</name>
    <dbReference type="NCBI Taxonomy" id="208963"/>
    <lineage>
        <taxon>Bacteria</taxon>
        <taxon>Pseudomonadati</taxon>
        <taxon>Pseudomonadota</taxon>
        <taxon>Gammaproteobacteria</taxon>
        <taxon>Pseudomonadales</taxon>
        <taxon>Pseudomonadaceae</taxon>
        <taxon>Pseudomonas</taxon>
    </lineage>
</organism>